<name>HUTI_BURO0</name>
<sequence>MKPTVWHHLRLCPHGHPDETIDDAAIAVDETGTIAWLGALSALPHGYAHWQREDLHGAWVTPGLVDCHTHLVYGGTRADEFAQRLAGVSYEEIARQGGGIVSTVRATRAADETTLFVQAAARLQPLLAEGVTAIEIKSGYGLDLASERKMLRVARQLGERFPVTVYTTFLGAHALPPEYAGRADEYIEEVCDRMLPTLADEGLVDAVDVFCERIGFSLAQTERVFEAATRRGLPVKLHAEQLSNAGGTALAARYRALSADHLEFLDEAGIEAMKAAGTVAVLLPGAYYFIRETQLPPIELLRKHGVPIALATDHNPGTSPLESLLLTLNMGCTLFRMTVPEVLQGVTRHAAAALGRADRHGALEVGRQADFAAWSVGSLAELAYWIGRPLCEQVVRGGTTVFRRMNG</sequence>
<keyword id="KW-0963">Cytoplasm</keyword>
<keyword id="KW-0369">Histidine metabolism</keyword>
<keyword id="KW-0378">Hydrolase</keyword>
<keyword id="KW-0408">Iron</keyword>
<keyword id="KW-0479">Metal-binding</keyword>
<keyword id="KW-0862">Zinc</keyword>
<feature type="chain" id="PRO_1000121536" description="Imidazolonepropionase">
    <location>
        <begin position="1"/>
        <end position="407"/>
    </location>
</feature>
<feature type="binding site" evidence="1">
    <location>
        <position position="68"/>
    </location>
    <ligand>
        <name>Fe(3+)</name>
        <dbReference type="ChEBI" id="CHEBI:29034"/>
    </ligand>
</feature>
<feature type="binding site" evidence="1">
    <location>
        <position position="68"/>
    </location>
    <ligand>
        <name>Zn(2+)</name>
        <dbReference type="ChEBI" id="CHEBI:29105"/>
    </ligand>
</feature>
<feature type="binding site" evidence="1">
    <location>
        <position position="70"/>
    </location>
    <ligand>
        <name>Fe(3+)</name>
        <dbReference type="ChEBI" id="CHEBI:29034"/>
    </ligand>
</feature>
<feature type="binding site" evidence="1">
    <location>
        <position position="70"/>
    </location>
    <ligand>
        <name>Zn(2+)</name>
        <dbReference type="ChEBI" id="CHEBI:29105"/>
    </ligand>
</feature>
<feature type="binding site" evidence="1">
    <location>
        <position position="77"/>
    </location>
    <ligand>
        <name>4-imidazolone-5-propanoate</name>
        <dbReference type="ChEBI" id="CHEBI:77893"/>
    </ligand>
</feature>
<feature type="binding site" evidence="1">
    <location>
        <position position="140"/>
    </location>
    <ligand>
        <name>4-imidazolone-5-propanoate</name>
        <dbReference type="ChEBI" id="CHEBI:77893"/>
    </ligand>
</feature>
<feature type="binding site" evidence="1">
    <location>
        <position position="140"/>
    </location>
    <ligand>
        <name>N-formimidoyl-L-glutamate</name>
        <dbReference type="ChEBI" id="CHEBI:58928"/>
    </ligand>
</feature>
<feature type="binding site" evidence="1">
    <location>
        <position position="173"/>
    </location>
    <ligand>
        <name>4-imidazolone-5-propanoate</name>
        <dbReference type="ChEBI" id="CHEBI:77893"/>
    </ligand>
</feature>
<feature type="binding site" evidence="1">
    <location>
        <position position="238"/>
    </location>
    <ligand>
        <name>Fe(3+)</name>
        <dbReference type="ChEBI" id="CHEBI:29034"/>
    </ligand>
</feature>
<feature type="binding site" evidence="1">
    <location>
        <position position="238"/>
    </location>
    <ligand>
        <name>Zn(2+)</name>
        <dbReference type="ChEBI" id="CHEBI:29105"/>
    </ligand>
</feature>
<feature type="binding site" evidence="1">
    <location>
        <position position="241"/>
    </location>
    <ligand>
        <name>4-imidazolone-5-propanoate</name>
        <dbReference type="ChEBI" id="CHEBI:77893"/>
    </ligand>
</feature>
<feature type="binding site" evidence="1">
    <location>
        <position position="313"/>
    </location>
    <ligand>
        <name>Fe(3+)</name>
        <dbReference type="ChEBI" id="CHEBI:29034"/>
    </ligand>
</feature>
<feature type="binding site" evidence="1">
    <location>
        <position position="313"/>
    </location>
    <ligand>
        <name>Zn(2+)</name>
        <dbReference type="ChEBI" id="CHEBI:29105"/>
    </ligand>
</feature>
<feature type="binding site" evidence="1">
    <location>
        <position position="315"/>
    </location>
    <ligand>
        <name>N-formimidoyl-L-glutamate</name>
        <dbReference type="ChEBI" id="CHEBI:58928"/>
    </ligand>
</feature>
<feature type="binding site" evidence="1">
    <location>
        <position position="317"/>
    </location>
    <ligand>
        <name>N-formimidoyl-L-glutamate</name>
        <dbReference type="ChEBI" id="CHEBI:58928"/>
    </ligand>
</feature>
<feature type="binding site" evidence="1">
    <location>
        <position position="318"/>
    </location>
    <ligand>
        <name>4-imidazolone-5-propanoate</name>
        <dbReference type="ChEBI" id="CHEBI:77893"/>
    </ligand>
</feature>
<protein>
    <recommendedName>
        <fullName evidence="1">Imidazolonepropionase</fullName>
        <ecNumber evidence="1">3.5.2.7</ecNumber>
    </recommendedName>
    <alternativeName>
        <fullName evidence="1">Imidazolone-5-propionate hydrolase</fullName>
    </alternativeName>
</protein>
<accession>B1JV46</accession>
<reference key="1">
    <citation type="submission" date="2008-02" db="EMBL/GenBank/DDBJ databases">
        <title>Complete sequence of chromosome 1 of Burkholderia cenocepacia MC0-3.</title>
        <authorList>
            <person name="Copeland A."/>
            <person name="Lucas S."/>
            <person name="Lapidus A."/>
            <person name="Barry K."/>
            <person name="Bruce D."/>
            <person name="Goodwin L."/>
            <person name="Glavina del Rio T."/>
            <person name="Dalin E."/>
            <person name="Tice H."/>
            <person name="Pitluck S."/>
            <person name="Chain P."/>
            <person name="Malfatti S."/>
            <person name="Shin M."/>
            <person name="Vergez L."/>
            <person name="Schmutz J."/>
            <person name="Larimer F."/>
            <person name="Land M."/>
            <person name="Hauser L."/>
            <person name="Kyrpides N."/>
            <person name="Mikhailova N."/>
            <person name="Tiedje J."/>
            <person name="Richardson P."/>
        </authorList>
    </citation>
    <scope>NUCLEOTIDE SEQUENCE [LARGE SCALE GENOMIC DNA]</scope>
    <source>
        <strain>MC0-3</strain>
    </source>
</reference>
<gene>
    <name evidence="1" type="primary">hutI</name>
    <name type="ordered locus">Bcenmc03_2185</name>
</gene>
<dbReference type="EC" id="3.5.2.7" evidence="1"/>
<dbReference type="EMBL" id="CP000958">
    <property type="protein sequence ID" value="ACA91346.1"/>
    <property type="molecule type" value="Genomic_DNA"/>
</dbReference>
<dbReference type="RefSeq" id="WP_012328848.1">
    <property type="nucleotide sequence ID" value="NC_010508.1"/>
</dbReference>
<dbReference type="SMR" id="B1JV46"/>
<dbReference type="GeneID" id="83048971"/>
<dbReference type="KEGG" id="bcm:Bcenmc03_2185"/>
<dbReference type="HOGENOM" id="CLU_041647_0_0_4"/>
<dbReference type="UniPathway" id="UPA00379">
    <property type="reaction ID" value="UER00551"/>
</dbReference>
<dbReference type="Proteomes" id="UP000002169">
    <property type="component" value="Chromosome 1"/>
</dbReference>
<dbReference type="GO" id="GO:0005737">
    <property type="term" value="C:cytoplasm"/>
    <property type="evidence" value="ECO:0007669"/>
    <property type="project" value="UniProtKB-SubCell"/>
</dbReference>
<dbReference type="GO" id="GO:0050480">
    <property type="term" value="F:imidazolonepropionase activity"/>
    <property type="evidence" value="ECO:0007669"/>
    <property type="project" value="UniProtKB-UniRule"/>
</dbReference>
<dbReference type="GO" id="GO:0005506">
    <property type="term" value="F:iron ion binding"/>
    <property type="evidence" value="ECO:0007669"/>
    <property type="project" value="UniProtKB-UniRule"/>
</dbReference>
<dbReference type="GO" id="GO:0008270">
    <property type="term" value="F:zinc ion binding"/>
    <property type="evidence" value="ECO:0007669"/>
    <property type="project" value="UniProtKB-UniRule"/>
</dbReference>
<dbReference type="GO" id="GO:0019556">
    <property type="term" value="P:L-histidine catabolic process to glutamate and formamide"/>
    <property type="evidence" value="ECO:0007669"/>
    <property type="project" value="UniProtKB-UniPathway"/>
</dbReference>
<dbReference type="GO" id="GO:0019557">
    <property type="term" value="P:L-histidine catabolic process to glutamate and formate"/>
    <property type="evidence" value="ECO:0007669"/>
    <property type="project" value="UniProtKB-UniPathway"/>
</dbReference>
<dbReference type="CDD" id="cd01296">
    <property type="entry name" value="Imidazolone-5PH"/>
    <property type="match status" value="1"/>
</dbReference>
<dbReference type="FunFam" id="3.20.20.140:FF:000007">
    <property type="entry name" value="Imidazolonepropionase"/>
    <property type="match status" value="1"/>
</dbReference>
<dbReference type="Gene3D" id="3.20.20.140">
    <property type="entry name" value="Metal-dependent hydrolases"/>
    <property type="match status" value="1"/>
</dbReference>
<dbReference type="Gene3D" id="2.30.40.10">
    <property type="entry name" value="Urease, subunit C, domain 1"/>
    <property type="match status" value="1"/>
</dbReference>
<dbReference type="HAMAP" id="MF_00372">
    <property type="entry name" value="HutI"/>
    <property type="match status" value="1"/>
</dbReference>
<dbReference type="InterPro" id="IPR006680">
    <property type="entry name" value="Amidohydro-rel"/>
</dbReference>
<dbReference type="InterPro" id="IPR005920">
    <property type="entry name" value="HutI"/>
</dbReference>
<dbReference type="InterPro" id="IPR011059">
    <property type="entry name" value="Metal-dep_hydrolase_composite"/>
</dbReference>
<dbReference type="InterPro" id="IPR032466">
    <property type="entry name" value="Metal_Hydrolase"/>
</dbReference>
<dbReference type="NCBIfam" id="TIGR01224">
    <property type="entry name" value="hutI"/>
    <property type="match status" value="1"/>
</dbReference>
<dbReference type="PANTHER" id="PTHR42752">
    <property type="entry name" value="IMIDAZOLONEPROPIONASE"/>
    <property type="match status" value="1"/>
</dbReference>
<dbReference type="PANTHER" id="PTHR42752:SF1">
    <property type="entry name" value="IMIDAZOLONEPROPIONASE-RELATED"/>
    <property type="match status" value="1"/>
</dbReference>
<dbReference type="Pfam" id="PF01979">
    <property type="entry name" value="Amidohydro_1"/>
    <property type="match status" value="1"/>
</dbReference>
<dbReference type="SUPFAM" id="SSF51338">
    <property type="entry name" value="Composite domain of metallo-dependent hydrolases"/>
    <property type="match status" value="1"/>
</dbReference>
<dbReference type="SUPFAM" id="SSF51556">
    <property type="entry name" value="Metallo-dependent hydrolases"/>
    <property type="match status" value="1"/>
</dbReference>
<organism>
    <name type="scientific">Burkholderia orbicola (strain MC0-3)</name>
    <dbReference type="NCBI Taxonomy" id="406425"/>
    <lineage>
        <taxon>Bacteria</taxon>
        <taxon>Pseudomonadati</taxon>
        <taxon>Pseudomonadota</taxon>
        <taxon>Betaproteobacteria</taxon>
        <taxon>Burkholderiales</taxon>
        <taxon>Burkholderiaceae</taxon>
        <taxon>Burkholderia</taxon>
        <taxon>Burkholderia cepacia complex</taxon>
        <taxon>Burkholderia orbicola</taxon>
    </lineage>
</organism>
<evidence type="ECO:0000255" key="1">
    <source>
        <dbReference type="HAMAP-Rule" id="MF_00372"/>
    </source>
</evidence>
<proteinExistence type="inferred from homology"/>
<comment type="function">
    <text evidence="1">Catalyzes the hydrolytic cleavage of the carbon-nitrogen bond in imidazolone-5-propanoate to yield N-formimidoyl-L-glutamate. It is the third step in the universal histidine degradation pathway.</text>
</comment>
<comment type="catalytic activity">
    <reaction evidence="1">
        <text>4-imidazolone-5-propanoate + H2O = N-formimidoyl-L-glutamate</text>
        <dbReference type="Rhea" id="RHEA:23660"/>
        <dbReference type="ChEBI" id="CHEBI:15377"/>
        <dbReference type="ChEBI" id="CHEBI:58928"/>
        <dbReference type="ChEBI" id="CHEBI:77893"/>
        <dbReference type="EC" id="3.5.2.7"/>
    </reaction>
</comment>
<comment type="cofactor">
    <cofactor evidence="1">
        <name>Zn(2+)</name>
        <dbReference type="ChEBI" id="CHEBI:29105"/>
    </cofactor>
    <cofactor evidence="1">
        <name>Fe(3+)</name>
        <dbReference type="ChEBI" id="CHEBI:29034"/>
    </cofactor>
    <text evidence="1">Binds 1 zinc or iron ion per subunit.</text>
</comment>
<comment type="pathway">
    <text evidence="1">Amino-acid degradation; L-histidine degradation into L-glutamate; N-formimidoyl-L-glutamate from L-histidine: step 3/3.</text>
</comment>
<comment type="subcellular location">
    <subcellularLocation>
        <location evidence="1">Cytoplasm</location>
    </subcellularLocation>
</comment>
<comment type="similarity">
    <text evidence="1">Belongs to the metallo-dependent hydrolases superfamily. HutI family.</text>
</comment>